<protein>
    <recommendedName>
        <fullName evidence="2">Large ribosomal subunit protein uL2c</fullName>
    </recommendedName>
    <alternativeName>
        <fullName evidence="4">50S ribosomal protein L2, chloroplastic</fullName>
    </alternativeName>
</protein>
<geneLocation type="chloroplast"/>
<feature type="chain" id="PRO_0000310077" description="Large ribosomal subunit protein uL2c">
    <location>
        <begin position="1"/>
        <end position="275"/>
    </location>
</feature>
<feature type="region of interest" description="Disordered" evidence="3">
    <location>
        <begin position="1"/>
        <end position="30"/>
    </location>
</feature>
<feature type="region of interest" description="Disordered" evidence="3">
    <location>
        <begin position="225"/>
        <end position="275"/>
    </location>
</feature>
<feature type="compositionally biased region" description="Polar residues" evidence="3">
    <location>
        <begin position="21"/>
        <end position="30"/>
    </location>
</feature>
<reference key="1">
    <citation type="journal article" date="2007" name="Mol. Phylogenet. Evol.">
        <title>Phylogenetic and evolutionary implications of complete chloroplast genome sequences of four early-diverging angiosperms: Buxus (Buxaceae), Chloranthus (Chloranthaceae), Dioscorea (Dioscoreaceae), and Illicium (Schisandraceae).</title>
        <authorList>
            <person name="Hansen D.R."/>
            <person name="Dastidar S.G."/>
            <person name="Cai Z."/>
            <person name="Penaflor C."/>
            <person name="Kuehl J.V."/>
            <person name="Boore J.L."/>
            <person name="Jansen R.K."/>
        </authorList>
    </citation>
    <scope>NUCLEOTIDE SEQUENCE [LARGE SCALE GENOMIC DNA]</scope>
</reference>
<dbReference type="EMBL" id="EF380354">
    <property type="protein sequence ID" value="ABQ52560.1"/>
    <property type="molecule type" value="Genomic_DNA"/>
</dbReference>
<dbReference type="RefSeq" id="YP_001294312.1">
    <property type="nucleotide sequence ID" value="NC_009600.1"/>
</dbReference>
<dbReference type="SMR" id="A6MMY6"/>
<dbReference type="GeneID" id="5236747"/>
<dbReference type="GO" id="GO:0009507">
    <property type="term" value="C:chloroplast"/>
    <property type="evidence" value="ECO:0007669"/>
    <property type="project" value="UniProtKB-SubCell"/>
</dbReference>
<dbReference type="GO" id="GO:0005762">
    <property type="term" value="C:mitochondrial large ribosomal subunit"/>
    <property type="evidence" value="ECO:0007669"/>
    <property type="project" value="TreeGrafter"/>
</dbReference>
<dbReference type="GO" id="GO:0019843">
    <property type="term" value="F:rRNA binding"/>
    <property type="evidence" value="ECO:0007669"/>
    <property type="project" value="UniProtKB-UniRule"/>
</dbReference>
<dbReference type="GO" id="GO:0003735">
    <property type="term" value="F:structural constituent of ribosome"/>
    <property type="evidence" value="ECO:0007669"/>
    <property type="project" value="InterPro"/>
</dbReference>
<dbReference type="GO" id="GO:0016740">
    <property type="term" value="F:transferase activity"/>
    <property type="evidence" value="ECO:0007669"/>
    <property type="project" value="InterPro"/>
</dbReference>
<dbReference type="GO" id="GO:0032543">
    <property type="term" value="P:mitochondrial translation"/>
    <property type="evidence" value="ECO:0007669"/>
    <property type="project" value="TreeGrafter"/>
</dbReference>
<dbReference type="FunFam" id="4.10.950.10:FF:000001">
    <property type="entry name" value="50S ribosomal protein L2"/>
    <property type="match status" value="1"/>
</dbReference>
<dbReference type="FunFam" id="2.30.30.30:FF:000008">
    <property type="entry name" value="50S ribosomal protein L2, chloroplastic"/>
    <property type="match status" value="1"/>
</dbReference>
<dbReference type="FunFam" id="2.40.50.140:FF:000029">
    <property type="entry name" value="50S ribosomal protein L2, chloroplastic"/>
    <property type="match status" value="1"/>
</dbReference>
<dbReference type="Gene3D" id="2.30.30.30">
    <property type="match status" value="1"/>
</dbReference>
<dbReference type="Gene3D" id="2.40.50.140">
    <property type="entry name" value="Nucleic acid-binding proteins"/>
    <property type="match status" value="1"/>
</dbReference>
<dbReference type="Gene3D" id="4.10.950.10">
    <property type="entry name" value="Ribosomal protein L2, domain 3"/>
    <property type="match status" value="1"/>
</dbReference>
<dbReference type="HAMAP" id="MF_01320_B">
    <property type="entry name" value="Ribosomal_uL2_B"/>
    <property type="match status" value="1"/>
</dbReference>
<dbReference type="InterPro" id="IPR012340">
    <property type="entry name" value="NA-bd_OB-fold"/>
</dbReference>
<dbReference type="InterPro" id="IPR014722">
    <property type="entry name" value="Rib_uL2_dom2"/>
</dbReference>
<dbReference type="InterPro" id="IPR002171">
    <property type="entry name" value="Ribosomal_uL2"/>
</dbReference>
<dbReference type="InterPro" id="IPR005880">
    <property type="entry name" value="Ribosomal_uL2_bac/org-type"/>
</dbReference>
<dbReference type="InterPro" id="IPR022669">
    <property type="entry name" value="Ribosomal_uL2_C"/>
</dbReference>
<dbReference type="InterPro" id="IPR022671">
    <property type="entry name" value="Ribosomal_uL2_CS"/>
</dbReference>
<dbReference type="InterPro" id="IPR014726">
    <property type="entry name" value="Ribosomal_uL2_dom3"/>
</dbReference>
<dbReference type="InterPro" id="IPR022666">
    <property type="entry name" value="Ribosomal_uL2_RNA-bd_dom"/>
</dbReference>
<dbReference type="InterPro" id="IPR008991">
    <property type="entry name" value="Translation_prot_SH3-like_sf"/>
</dbReference>
<dbReference type="NCBIfam" id="TIGR01171">
    <property type="entry name" value="rplB_bact"/>
    <property type="match status" value="1"/>
</dbReference>
<dbReference type="PANTHER" id="PTHR13691:SF5">
    <property type="entry name" value="LARGE RIBOSOMAL SUBUNIT PROTEIN UL2M"/>
    <property type="match status" value="1"/>
</dbReference>
<dbReference type="PANTHER" id="PTHR13691">
    <property type="entry name" value="RIBOSOMAL PROTEIN L2"/>
    <property type="match status" value="1"/>
</dbReference>
<dbReference type="Pfam" id="PF00181">
    <property type="entry name" value="Ribosomal_L2"/>
    <property type="match status" value="1"/>
</dbReference>
<dbReference type="Pfam" id="PF03947">
    <property type="entry name" value="Ribosomal_L2_C"/>
    <property type="match status" value="1"/>
</dbReference>
<dbReference type="PIRSF" id="PIRSF002158">
    <property type="entry name" value="Ribosomal_L2"/>
    <property type="match status" value="1"/>
</dbReference>
<dbReference type="SMART" id="SM01383">
    <property type="entry name" value="Ribosomal_L2"/>
    <property type="match status" value="1"/>
</dbReference>
<dbReference type="SMART" id="SM01382">
    <property type="entry name" value="Ribosomal_L2_C"/>
    <property type="match status" value="1"/>
</dbReference>
<dbReference type="SUPFAM" id="SSF50249">
    <property type="entry name" value="Nucleic acid-binding proteins"/>
    <property type="match status" value="1"/>
</dbReference>
<dbReference type="SUPFAM" id="SSF50104">
    <property type="entry name" value="Translation proteins SH3-like domain"/>
    <property type="match status" value="1"/>
</dbReference>
<dbReference type="PROSITE" id="PS00467">
    <property type="entry name" value="RIBOSOMAL_L2"/>
    <property type="match status" value="1"/>
</dbReference>
<keyword id="KW-0150">Chloroplast</keyword>
<keyword id="KW-0934">Plastid</keyword>
<keyword id="KW-0687">Ribonucleoprotein</keyword>
<keyword id="KW-0689">Ribosomal protein</keyword>
<evidence type="ECO:0000250" key="1"/>
<evidence type="ECO:0000255" key="2">
    <source>
        <dbReference type="HAMAP-Rule" id="MF_01320"/>
    </source>
</evidence>
<evidence type="ECO:0000256" key="3">
    <source>
        <dbReference type="SAM" id="MobiDB-lite"/>
    </source>
</evidence>
<evidence type="ECO:0000305" key="4"/>
<organism>
    <name type="scientific">Illicium oligandrum</name>
    <name type="common">Star anise</name>
    <dbReference type="NCBI Taxonomy" id="145286"/>
    <lineage>
        <taxon>Eukaryota</taxon>
        <taxon>Viridiplantae</taxon>
        <taxon>Streptophyta</taxon>
        <taxon>Embryophyta</taxon>
        <taxon>Tracheophyta</taxon>
        <taxon>Spermatophyta</taxon>
        <taxon>Magnoliopsida</taxon>
        <taxon>Austrobaileyales</taxon>
        <taxon>Schisandraceae</taxon>
        <taxon>Illicium</taxon>
    </lineage>
</organism>
<sequence length="275" mass="29925">MAIHLYKTSTPSTRNGAVDSQAKSTPQKQKSLIYGQHHCGKGRNARGVITTGHRGGGHKRLYRKINFRRNEKDISGRIVTIEYDPNRNAYICLIHYGDGEKRYILHPRGARIGDTIVSGTEVPISMGNALPLTDMSLGTAIHNIEITLGKGGQLARAAGTVAKLIAKEGKSATLRLPSGEVRLVSKNCSATVGQVGNVGVNQKSLGRAGSKCWLGKRPVVRGVVMNPVDHPHGGGEGRAPIGRKRPTTPWGYPALGRRSRKRNKYSDSFILRRRK</sequence>
<gene>
    <name type="primary">rpl2</name>
</gene>
<name>RK2_ILLOL</name>
<accession>A6MMY6</accession>
<proteinExistence type="inferred from homology"/>
<comment type="subunit">
    <text evidence="1">Part of the 50S ribosomal subunit.</text>
</comment>
<comment type="subcellular location">
    <subcellularLocation>
        <location>Plastid</location>
        <location>Chloroplast</location>
    </subcellularLocation>
</comment>
<comment type="similarity">
    <text evidence="4">Belongs to the universal ribosomal protein uL2 family.</text>
</comment>